<accession>A4J0C1</accession>
<gene>
    <name evidence="1" type="primary">recA</name>
    <name type="ordered locus">FTW_1988</name>
</gene>
<evidence type="ECO:0000255" key="1">
    <source>
        <dbReference type="HAMAP-Rule" id="MF_00268"/>
    </source>
</evidence>
<evidence type="ECO:0000256" key="2">
    <source>
        <dbReference type="SAM" id="MobiDB-lite"/>
    </source>
</evidence>
<dbReference type="EMBL" id="CP000608">
    <property type="protein sequence ID" value="ABO47623.1"/>
    <property type="molecule type" value="Genomic_DNA"/>
</dbReference>
<dbReference type="RefSeq" id="WP_003013734.1">
    <property type="nucleotide sequence ID" value="NC_009257.1"/>
</dbReference>
<dbReference type="SMR" id="A4J0C1"/>
<dbReference type="KEGG" id="ftw:FTW_1988"/>
<dbReference type="HOGENOM" id="CLU_040469_3_2_6"/>
<dbReference type="GO" id="GO:0005829">
    <property type="term" value="C:cytosol"/>
    <property type="evidence" value="ECO:0007669"/>
    <property type="project" value="TreeGrafter"/>
</dbReference>
<dbReference type="GO" id="GO:0005524">
    <property type="term" value="F:ATP binding"/>
    <property type="evidence" value="ECO:0007669"/>
    <property type="project" value="UniProtKB-UniRule"/>
</dbReference>
<dbReference type="GO" id="GO:0016887">
    <property type="term" value="F:ATP hydrolysis activity"/>
    <property type="evidence" value="ECO:0007669"/>
    <property type="project" value="InterPro"/>
</dbReference>
<dbReference type="GO" id="GO:0140664">
    <property type="term" value="F:ATP-dependent DNA damage sensor activity"/>
    <property type="evidence" value="ECO:0007669"/>
    <property type="project" value="InterPro"/>
</dbReference>
<dbReference type="GO" id="GO:0003684">
    <property type="term" value="F:damaged DNA binding"/>
    <property type="evidence" value="ECO:0007669"/>
    <property type="project" value="UniProtKB-UniRule"/>
</dbReference>
<dbReference type="GO" id="GO:0003697">
    <property type="term" value="F:single-stranded DNA binding"/>
    <property type="evidence" value="ECO:0007669"/>
    <property type="project" value="UniProtKB-UniRule"/>
</dbReference>
<dbReference type="GO" id="GO:0006310">
    <property type="term" value="P:DNA recombination"/>
    <property type="evidence" value="ECO:0007669"/>
    <property type="project" value="UniProtKB-UniRule"/>
</dbReference>
<dbReference type="GO" id="GO:0006281">
    <property type="term" value="P:DNA repair"/>
    <property type="evidence" value="ECO:0007669"/>
    <property type="project" value="UniProtKB-UniRule"/>
</dbReference>
<dbReference type="GO" id="GO:0009432">
    <property type="term" value="P:SOS response"/>
    <property type="evidence" value="ECO:0007669"/>
    <property type="project" value="UniProtKB-UniRule"/>
</dbReference>
<dbReference type="CDD" id="cd00983">
    <property type="entry name" value="RecA"/>
    <property type="match status" value="1"/>
</dbReference>
<dbReference type="FunFam" id="3.40.50.300:FF:000087">
    <property type="entry name" value="Recombinase RecA"/>
    <property type="match status" value="1"/>
</dbReference>
<dbReference type="Gene3D" id="3.40.50.300">
    <property type="entry name" value="P-loop containing nucleotide triphosphate hydrolases"/>
    <property type="match status" value="1"/>
</dbReference>
<dbReference type="HAMAP" id="MF_00268">
    <property type="entry name" value="RecA"/>
    <property type="match status" value="1"/>
</dbReference>
<dbReference type="InterPro" id="IPR003593">
    <property type="entry name" value="AAA+_ATPase"/>
</dbReference>
<dbReference type="InterPro" id="IPR013765">
    <property type="entry name" value="DNA_recomb/repair_RecA"/>
</dbReference>
<dbReference type="InterPro" id="IPR020584">
    <property type="entry name" value="DNA_recomb/repair_RecA_CS"/>
</dbReference>
<dbReference type="InterPro" id="IPR027417">
    <property type="entry name" value="P-loop_NTPase"/>
</dbReference>
<dbReference type="InterPro" id="IPR049261">
    <property type="entry name" value="RecA-like_C"/>
</dbReference>
<dbReference type="InterPro" id="IPR049428">
    <property type="entry name" value="RecA-like_N"/>
</dbReference>
<dbReference type="InterPro" id="IPR020588">
    <property type="entry name" value="RecA_ATP-bd"/>
</dbReference>
<dbReference type="InterPro" id="IPR023400">
    <property type="entry name" value="RecA_C_sf"/>
</dbReference>
<dbReference type="InterPro" id="IPR020587">
    <property type="entry name" value="RecA_monomer-monomer_interface"/>
</dbReference>
<dbReference type="NCBIfam" id="TIGR02012">
    <property type="entry name" value="tigrfam_recA"/>
    <property type="match status" value="1"/>
</dbReference>
<dbReference type="PANTHER" id="PTHR45900:SF1">
    <property type="entry name" value="MITOCHONDRIAL DNA REPAIR PROTEIN RECA HOMOLOG-RELATED"/>
    <property type="match status" value="1"/>
</dbReference>
<dbReference type="PANTHER" id="PTHR45900">
    <property type="entry name" value="RECA"/>
    <property type="match status" value="1"/>
</dbReference>
<dbReference type="Pfam" id="PF00154">
    <property type="entry name" value="RecA"/>
    <property type="match status" value="1"/>
</dbReference>
<dbReference type="Pfam" id="PF21096">
    <property type="entry name" value="RecA_C"/>
    <property type="match status" value="1"/>
</dbReference>
<dbReference type="PRINTS" id="PR00142">
    <property type="entry name" value="RECA"/>
</dbReference>
<dbReference type="SMART" id="SM00382">
    <property type="entry name" value="AAA"/>
    <property type="match status" value="1"/>
</dbReference>
<dbReference type="SUPFAM" id="SSF52540">
    <property type="entry name" value="P-loop containing nucleoside triphosphate hydrolases"/>
    <property type="match status" value="1"/>
</dbReference>
<dbReference type="SUPFAM" id="SSF54752">
    <property type="entry name" value="RecA protein, C-terminal domain"/>
    <property type="match status" value="1"/>
</dbReference>
<dbReference type="PROSITE" id="PS00321">
    <property type="entry name" value="RECA_1"/>
    <property type="match status" value="1"/>
</dbReference>
<dbReference type="PROSITE" id="PS50162">
    <property type="entry name" value="RECA_2"/>
    <property type="match status" value="1"/>
</dbReference>
<dbReference type="PROSITE" id="PS50163">
    <property type="entry name" value="RECA_3"/>
    <property type="match status" value="1"/>
</dbReference>
<comment type="function">
    <text evidence="1">Can catalyze the hydrolysis of ATP in the presence of single-stranded DNA, the ATP-dependent uptake of single-stranded DNA by duplex DNA, and the ATP-dependent hybridization of homologous single-stranded DNAs. It interacts with LexA causing its activation and leading to its autocatalytic cleavage.</text>
</comment>
<comment type="subcellular location">
    <subcellularLocation>
        <location evidence="1">Cytoplasm</location>
    </subcellularLocation>
</comment>
<comment type="similarity">
    <text evidence="1">Belongs to the RecA family.</text>
</comment>
<keyword id="KW-0067">ATP-binding</keyword>
<keyword id="KW-0963">Cytoplasm</keyword>
<keyword id="KW-0227">DNA damage</keyword>
<keyword id="KW-0233">DNA recombination</keyword>
<keyword id="KW-0234">DNA repair</keyword>
<keyword id="KW-0238">DNA-binding</keyword>
<keyword id="KW-0547">Nucleotide-binding</keyword>
<keyword id="KW-0742">SOS response</keyword>
<sequence length="359" mass="38834">MSKEKALESALSQIEKQFGKGAIMRLGDQEAAHDIDVIPSGIIALDVALGIGGYPKGRIIEIYGHESSGKTTLTLLAIAQCQKQGGTAAFVDAEHALDPKYAKLLGVDVDNLIVSQPDTGEQALEIADMLVRSGGVDIVVIDSVAALTPKAEIEGDMGDSHMGLQARLMSQALRKLTANIKRSNTLVIFINQIRMKIGVMFGNPETTTGGNALKFYSSVRLEVKKGGSIKDGIDVSGNEIKVKVVKNKVAPPFKQADFELIYGEGISLEAELIDLGAKYNIIEKSGAWYSYKGKKIGQGKEKSKEYLKENTAERDEIERAILELLLPNKYSNKDSNDSPKEGSKIKTKVNPAVTQDELI</sequence>
<proteinExistence type="inferred from homology"/>
<protein>
    <recommendedName>
        <fullName evidence="1">Protein RecA</fullName>
    </recommendedName>
    <alternativeName>
        <fullName evidence="1">Recombinase A</fullName>
    </alternativeName>
</protein>
<feature type="chain" id="PRO_1000047924" description="Protein RecA">
    <location>
        <begin position="1"/>
        <end position="359"/>
    </location>
</feature>
<feature type="region of interest" description="Disordered" evidence="2">
    <location>
        <begin position="329"/>
        <end position="359"/>
    </location>
</feature>
<feature type="compositionally biased region" description="Basic and acidic residues" evidence="2">
    <location>
        <begin position="331"/>
        <end position="344"/>
    </location>
</feature>
<feature type="binding site" evidence="1">
    <location>
        <begin position="64"/>
        <end position="71"/>
    </location>
    <ligand>
        <name>ATP</name>
        <dbReference type="ChEBI" id="CHEBI:30616"/>
    </ligand>
</feature>
<reference key="1">
    <citation type="journal article" date="2007" name="PLoS ONE">
        <title>Complete genomic characterization of a pathogenic A.II strain of Francisella tularensis subspecies tularensis.</title>
        <authorList>
            <person name="Beckstrom-Sternberg S.M."/>
            <person name="Auerbach R.K."/>
            <person name="Godbole S."/>
            <person name="Pearson J.V."/>
            <person name="Beckstrom-Sternberg J.S."/>
            <person name="Deng Z."/>
            <person name="Munk C."/>
            <person name="Kubota K."/>
            <person name="Zhou Y."/>
            <person name="Bruce D."/>
            <person name="Noronha J."/>
            <person name="Scheuermann R.H."/>
            <person name="Wang A."/>
            <person name="Wei X."/>
            <person name="Wang J."/>
            <person name="Hao J."/>
            <person name="Wagner D.M."/>
            <person name="Brettin T.S."/>
            <person name="Brown N."/>
            <person name="Gilna P."/>
            <person name="Keim P.S."/>
        </authorList>
    </citation>
    <scope>NUCLEOTIDE SEQUENCE [LARGE SCALE GENOMIC DNA]</scope>
    <source>
        <strain>WY96-3418</strain>
    </source>
</reference>
<name>RECA_FRATW</name>
<organism>
    <name type="scientific">Francisella tularensis subsp. tularensis (strain WY96-3418)</name>
    <dbReference type="NCBI Taxonomy" id="418136"/>
    <lineage>
        <taxon>Bacteria</taxon>
        <taxon>Pseudomonadati</taxon>
        <taxon>Pseudomonadota</taxon>
        <taxon>Gammaproteobacteria</taxon>
        <taxon>Thiotrichales</taxon>
        <taxon>Francisellaceae</taxon>
        <taxon>Francisella</taxon>
    </lineage>
</organism>